<keyword id="KW-0150">Chloroplast</keyword>
<keyword id="KW-0472">Membrane</keyword>
<keyword id="KW-0520">NAD</keyword>
<keyword id="KW-0521">NADP</keyword>
<keyword id="KW-0934">Plastid</keyword>
<keyword id="KW-0618">Plastoquinone</keyword>
<keyword id="KW-0874">Quinone</keyword>
<keyword id="KW-0793">Thylakoid</keyword>
<keyword id="KW-1278">Translocase</keyword>
<keyword id="KW-0812">Transmembrane</keyword>
<keyword id="KW-1133">Transmembrane helix</keyword>
<keyword id="KW-0813">Transport</keyword>
<feature type="chain" id="PRO_0000391302" description="NAD(P)H-quinone oxidoreductase subunit 2 B, chloroplastic">
    <location>
        <begin position="1"/>
        <end position="492"/>
    </location>
</feature>
<feature type="transmembrane region" description="Helical" evidence="1">
    <location>
        <begin position="6"/>
        <end position="26"/>
    </location>
</feature>
<feature type="transmembrane region" description="Helical" evidence="1">
    <location>
        <begin position="39"/>
        <end position="59"/>
    </location>
</feature>
<feature type="transmembrane region" description="Helical" evidence="1">
    <location>
        <begin position="81"/>
        <end position="101"/>
    </location>
</feature>
<feature type="transmembrane region" description="Helical" evidence="1">
    <location>
        <begin position="106"/>
        <end position="126"/>
    </location>
</feature>
<feature type="transmembrane region" description="Helical" evidence="1">
    <location>
        <begin position="131"/>
        <end position="151"/>
    </location>
</feature>
<feature type="transmembrane region" description="Helical" evidence="1">
    <location>
        <begin position="165"/>
        <end position="185"/>
    </location>
</feature>
<feature type="transmembrane region" description="Helical" evidence="1">
    <location>
        <begin position="209"/>
        <end position="229"/>
    </location>
</feature>
<feature type="transmembrane region" description="Helical" evidence="1">
    <location>
        <begin position="277"/>
        <end position="297"/>
    </location>
</feature>
<feature type="transmembrane region" description="Helical" evidence="1">
    <location>
        <begin position="305"/>
        <end position="325"/>
    </location>
</feature>
<feature type="transmembrane region" description="Helical" evidence="1">
    <location>
        <begin position="336"/>
        <end position="356"/>
    </location>
</feature>
<feature type="transmembrane region" description="Helical" evidence="1">
    <location>
        <begin position="377"/>
        <end position="397"/>
    </location>
</feature>
<feature type="transmembrane region" description="Helical" evidence="1">
    <location>
        <begin position="400"/>
        <end position="420"/>
    </location>
</feature>
<feature type="transmembrane region" description="Helical" evidence="1">
    <location>
        <begin position="464"/>
        <end position="484"/>
    </location>
</feature>
<proteinExistence type="inferred from homology"/>
<sequence>MKAFHLLLFDGSLIFPECILIFGLILLLMIDSTSDQKDISWFYFISSTSLVMSITALLFRWREEPMIAFSGNLQTNNFNEIFQFLILLCSTLCIPLSVEYIECTEMAITEFLLFILTTTLGGMFLCGANDLITIFVALECFSLCSYLLSGYTKKDVRSNEATTKYLLMGGASSSILVHGFSWLYGSSGGEIELQEIVNGLINTQMYNSPGILIALLFITVGIGFKLSPAPSHQWTPDVYEGSPTPVVAFLSVTSKVAASASATRIFDIPFYFSSNEWHLLLEILAILSMILGNLIAITQTSMKRMLAYSSIGQIGYVIIGIIVGDSNGGYASMITYMLFYISMNLGTFACIVSFGLRTGTDNIRDYAGLYTKDPYLALSLALCLLSLGGLPPLAGFFGKLHLFWCGWQAGLYFLVSIGLLTSVVSIYYYLKIIKLLMTGRNQEITPHVRNYRRSPFRSNNSIEFSMIVCVIASTIPGISMNPIIEIAQDTLF</sequence>
<protein>
    <recommendedName>
        <fullName evidence="1">NAD(P)H-quinone oxidoreductase subunit 2 B, chloroplastic</fullName>
        <ecNumber evidence="1">7.1.1.-</ecNumber>
    </recommendedName>
    <alternativeName>
        <fullName evidence="1">NAD(P)H dehydrogenase, subunit 2 B</fullName>
    </alternativeName>
    <alternativeName>
        <fullName evidence="1">NADH-plastoquinone oxidoreductase subunit 2 B</fullName>
    </alternativeName>
</protein>
<evidence type="ECO:0000255" key="1">
    <source>
        <dbReference type="HAMAP-Rule" id="MF_00445"/>
    </source>
</evidence>
<evidence type="ECO:0000305" key="2"/>
<comment type="function">
    <text evidence="1">NDH shuttles electrons from NAD(P)H:plastoquinone, via FMN and iron-sulfur (Fe-S) centers, to quinones in the photosynthetic chain and possibly in a chloroplast respiratory chain. The immediate electron acceptor for the enzyme in this species is believed to be plastoquinone. Couples the redox reaction to proton translocation, and thus conserves the redox energy in a proton gradient.</text>
</comment>
<comment type="catalytic activity">
    <reaction evidence="1">
        <text>a plastoquinone + NADH + (n+1) H(+)(in) = a plastoquinol + NAD(+) + n H(+)(out)</text>
        <dbReference type="Rhea" id="RHEA:42608"/>
        <dbReference type="Rhea" id="RHEA-COMP:9561"/>
        <dbReference type="Rhea" id="RHEA-COMP:9562"/>
        <dbReference type="ChEBI" id="CHEBI:15378"/>
        <dbReference type="ChEBI" id="CHEBI:17757"/>
        <dbReference type="ChEBI" id="CHEBI:57540"/>
        <dbReference type="ChEBI" id="CHEBI:57945"/>
        <dbReference type="ChEBI" id="CHEBI:62192"/>
    </reaction>
</comment>
<comment type="catalytic activity">
    <reaction evidence="1">
        <text>a plastoquinone + NADPH + (n+1) H(+)(in) = a plastoquinol + NADP(+) + n H(+)(out)</text>
        <dbReference type="Rhea" id="RHEA:42612"/>
        <dbReference type="Rhea" id="RHEA-COMP:9561"/>
        <dbReference type="Rhea" id="RHEA-COMP:9562"/>
        <dbReference type="ChEBI" id="CHEBI:15378"/>
        <dbReference type="ChEBI" id="CHEBI:17757"/>
        <dbReference type="ChEBI" id="CHEBI:57783"/>
        <dbReference type="ChEBI" id="CHEBI:58349"/>
        <dbReference type="ChEBI" id="CHEBI:62192"/>
    </reaction>
</comment>
<comment type="subunit">
    <text evidence="1">NDH is composed of at least 16 different subunits, 5 of which are encoded in the nucleus.</text>
</comment>
<comment type="subcellular location">
    <subcellularLocation>
        <location evidence="1">Plastid</location>
        <location evidence="1">Chloroplast thylakoid membrane</location>
        <topology evidence="1">Multi-pass membrane protein</topology>
    </subcellularLocation>
</comment>
<comment type="similarity">
    <text evidence="1">Belongs to the complex I subunit 2 family.</text>
</comment>
<comment type="caution">
    <text evidence="2">This protein is smaller than usual in this organism, and may not be functional.</text>
</comment>
<reference key="1">
    <citation type="journal article" date="2007" name="BMC Genomics">
        <title>Rapid evolutionary change of common bean (Phaseolus vulgaris L) plastome, and the genomic diversification of legume chloroplasts.</title>
        <authorList>
            <person name="Guo X."/>
            <person name="Castillo-Ramirez S."/>
            <person name="Gonzalez V."/>
            <person name="Bustos P."/>
            <person name="Fernandez-Vazquez J.L."/>
            <person name="Santamaria R.I."/>
            <person name="Arellano J."/>
            <person name="Cevallos M.A."/>
            <person name="Davila G."/>
        </authorList>
    </citation>
    <scope>NUCLEOTIDE SEQUENCE [LARGE SCALE GENOMIC DNA]</scope>
    <source>
        <strain>cv. Negro Jamapa</strain>
    </source>
</reference>
<reference key="2">
    <citation type="submission" date="2007-10" db="EMBL/GenBank/DDBJ databases">
        <title>Complete nucleotide sequence of the plastid genome of the common bean, Phaseolus vulgaris.</title>
        <authorList>
            <person name="Moore M.J."/>
            <person name="Triplett E.W."/>
            <person name="Broughton W.J."/>
            <person name="Soltis P.S."/>
            <person name="Soltis D.E."/>
        </authorList>
    </citation>
    <scope>NUCLEOTIDE SEQUENCE [LARGE SCALE GENOMIC DNA]</scope>
</reference>
<name>NU2C2_PHAVU</name>
<geneLocation type="chloroplast"/>
<organism>
    <name type="scientific">Phaseolus vulgaris</name>
    <name type="common">Kidney bean</name>
    <name type="synonym">French bean</name>
    <dbReference type="NCBI Taxonomy" id="3885"/>
    <lineage>
        <taxon>Eukaryota</taxon>
        <taxon>Viridiplantae</taxon>
        <taxon>Streptophyta</taxon>
        <taxon>Embryophyta</taxon>
        <taxon>Tracheophyta</taxon>
        <taxon>Spermatophyta</taxon>
        <taxon>Magnoliopsida</taxon>
        <taxon>eudicotyledons</taxon>
        <taxon>Gunneridae</taxon>
        <taxon>Pentapetalae</taxon>
        <taxon>rosids</taxon>
        <taxon>fabids</taxon>
        <taxon>Fabales</taxon>
        <taxon>Fabaceae</taxon>
        <taxon>Papilionoideae</taxon>
        <taxon>50 kb inversion clade</taxon>
        <taxon>NPAAA clade</taxon>
        <taxon>indigoferoid/millettioid clade</taxon>
        <taxon>Phaseoleae</taxon>
        <taxon>Phaseolus</taxon>
    </lineage>
</organism>
<accession>P0CD29</accession>
<accession>A4GGF6</accession>
<dbReference type="EC" id="7.1.1.-" evidence="1"/>
<dbReference type="EMBL" id="DQ886273">
    <property type="protein sequence ID" value="ABP35957.1"/>
    <property type="molecule type" value="Genomic_DNA"/>
</dbReference>
<dbReference type="EMBL" id="EU196765">
    <property type="protein sequence ID" value="ABW22823.1"/>
    <property type="molecule type" value="Genomic_DNA"/>
</dbReference>
<dbReference type="SMR" id="P0CD29"/>
<dbReference type="KEGG" id="pvu:4961767"/>
<dbReference type="KEGG" id="pvu:5075325"/>
<dbReference type="GO" id="GO:0009535">
    <property type="term" value="C:chloroplast thylakoid membrane"/>
    <property type="evidence" value="ECO:0007669"/>
    <property type="project" value="UniProtKB-SubCell"/>
</dbReference>
<dbReference type="GO" id="GO:0008137">
    <property type="term" value="F:NADH dehydrogenase (ubiquinone) activity"/>
    <property type="evidence" value="ECO:0007669"/>
    <property type="project" value="InterPro"/>
</dbReference>
<dbReference type="GO" id="GO:0048038">
    <property type="term" value="F:quinone binding"/>
    <property type="evidence" value="ECO:0007669"/>
    <property type="project" value="UniProtKB-KW"/>
</dbReference>
<dbReference type="GO" id="GO:0042773">
    <property type="term" value="P:ATP synthesis coupled electron transport"/>
    <property type="evidence" value="ECO:0007669"/>
    <property type="project" value="InterPro"/>
</dbReference>
<dbReference type="GO" id="GO:0019684">
    <property type="term" value="P:photosynthesis, light reaction"/>
    <property type="evidence" value="ECO:0007669"/>
    <property type="project" value="UniProtKB-UniRule"/>
</dbReference>
<dbReference type="HAMAP" id="MF_00445">
    <property type="entry name" value="NDH1_NuoN_1"/>
    <property type="match status" value="1"/>
</dbReference>
<dbReference type="InterPro" id="IPR010096">
    <property type="entry name" value="NADH-Q_OxRdtase_suN/2"/>
</dbReference>
<dbReference type="InterPro" id="IPR001750">
    <property type="entry name" value="ND/Mrp_TM"/>
</dbReference>
<dbReference type="InterPro" id="IPR045693">
    <property type="entry name" value="Ndh2_N"/>
</dbReference>
<dbReference type="NCBIfam" id="TIGR01770">
    <property type="entry name" value="NDH_I_N"/>
    <property type="match status" value="1"/>
</dbReference>
<dbReference type="NCBIfam" id="NF002701">
    <property type="entry name" value="PRK02504.1"/>
    <property type="match status" value="1"/>
</dbReference>
<dbReference type="PANTHER" id="PTHR22773">
    <property type="entry name" value="NADH DEHYDROGENASE"/>
    <property type="match status" value="1"/>
</dbReference>
<dbReference type="Pfam" id="PF19530">
    <property type="entry name" value="Ndh2_N"/>
    <property type="match status" value="1"/>
</dbReference>
<dbReference type="Pfam" id="PF00361">
    <property type="entry name" value="Proton_antipo_M"/>
    <property type="match status" value="1"/>
</dbReference>
<dbReference type="PRINTS" id="PR01434">
    <property type="entry name" value="NADHDHGNASE5"/>
</dbReference>
<gene>
    <name evidence="1" type="primary">ndhB2</name>
</gene>